<organism>
    <name type="scientific">Macaca fascicularis</name>
    <name type="common">Crab-eating macaque</name>
    <name type="synonym">Cynomolgus monkey</name>
    <dbReference type="NCBI Taxonomy" id="9541"/>
    <lineage>
        <taxon>Eukaryota</taxon>
        <taxon>Metazoa</taxon>
        <taxon>Chordata</taxon>
        <taxon>Craniata</taxon>
        <taxon>Vertebrata</taxon>
        <taxon>Euteleostomi</taxon>
        <taxon>Mammalia</taxon>
        <taxon>Eutheria</taxon>
        <taxon>Euarchontoglires</taxon>
        <taxon>Primates</taxon>
        <taxon>Haplorrhini</taxon>
        <taxon>Catarrhini</taxon>
        <taxon>Cercopithecidae</taxon>
        <taxon>Cercopithecinae</taxon>
        <taxon>Macaca</taxon>
    </lineage>
</organism>
<protein>
    <recommendedName>
        <fullName>Leucine-rich repeat-containing protein 53</fullName>
    </recommendedName>
</protein>
<feature type="chain" id="PRO_0000317368" description="Leucine-rich repeat-containing protein 53">
    <location>
        <begin position="1"/>
        <end position="510"/>
    </location>
</feature>
<feature type="transmembrane region" description="Helical" evidence="1">
    <location>
        <begin position="294"/>
        <end position="314"/>
    </location>
</feature>
<feature type="repeat" description="LRR 1">
    <location>
        <begin position="34"/>
        <end position="55"/>
    </location>
</feature>
<feature type="repeat" description="LRR 2">
    <location>
        <begin position="58"/>
        <end position="79"/>
    </location>
</feature>
<feature type="repeat" description="LRR 3">
    <location>
        <begin position="82"/>
        <end position="102"/>
    </location>
</feature>
<feature type="repeat" description="LRR 4">
    <location>
        <begin position="108"/>
        <end position="129"/>
    </location>
</feature>
<feature type="repeat" description="LRR 5">
    <location>
        <begin position="132"/>
        <end position="153"/>
    </location>
</feature>
<feature type="repeat" description="LRR 6">
    <location>
        <begin position="158"/>
        <end position="179"/>
    </location>
</feature>
<feature type="repeat" description="LRR 7">
    <location>
        <begin position="182"/>
        <end position="203"/>
    </location>
</feature>
<feature type="domain" description="LRRCT">
    <location>
        <begin position="214"/>
        <end position="271"/>
    </location>
</feature>
<reference key="1">
    <citation type="journal article" date="2002" name="Genome Biol.">
        <title>Prediction of unidentified human genes on the basis of sequence similarity to novel cDNAs from cynomolgus monkey brain.</title>
        <authorList>
            <person name="Osada N."/>
            <person name="Hida M."/>
            <person name="Kusuda J."/>
            <person name="Tanuma R."/>
            <person name="Hirata M."/>
            <person name="Hirai M."/>
            <person name="Terao K."/>
            <person name="Suzuki Y."/>
            <person name="Sugano S."/>
            <person name="Hashimoto K."/>
        </authorList>
    </citation>
    <scope>NUCLEOTIDE SEQUENCE [LARGE SCALE MRNA]</scope>
    <source>
        <tissue>Frontal cortex</tissue>
    </source>
</reference>
<evidence type="ECO:0000255" key="1"/>
<evidence type="ECO:0000305" key="2"/>
<accession>Q9BGY6</accession>
<proteinExistence type="evidence at transcript level"/>
<comment type="subcellular location">
    <subcellularLocation>
        <location evidence="2">Membrane</location>
        <topology evidence="2">Single-pass membrane protein</topology>
    </subcellularLocation>
</comment>
<dbReference type="EMBL" id="AB055271">
    <property type="protein sequence ID" value="BAB21895.1"/>
    <property type="molecule type" value="mRNA"/>
</dbReference>
<dbReference type="SMR" id="Q9BGY6"/>
<dbReference type="STRING" id="9541.ENSMFAP00000001309"/>
<dbReference type="eggNOG" id="KOG0619">
    <property type="taxonomic scope" value="Eukaryota"/>
</dbReference>
<dbReference type="Proteomes" id="UP000233100">
    <property type="component" value="Unplaced"/>
</dbReference>
<dbReference type="GO" id="GO:0005886">
    <property type="term" value="C:plasma membrane"/>
    <property type="evidence" value="ECO:0007669"/>
    <property type="project" value="TreeGrafter"/>
</dbReference>
<dbReference type="Gene3D" id="3.80.10.10">
    <property type="entry name" value="Ribonuclease Inhibitor"/>
    <property type="match status" value="2"/>
</dbReference>
<dbReference type="InterPro" id="IPR001611">
    <property type="entry name" value="Leu-rich_rpt"/>
</dbReference>
<dbReference type="InterPro" id="IPR003591">
    <property type="entry name" value="Leu-rich_rpt_typical-subtyp"/>
</dbReference>
<dbReference type="InterPro" id="IPR032675">
    <property type="entry name" value="LRR_dom_sf"/>
</dbReference>
<dbReference type="InterPro" id="IPR050541">
    <property type="entry name" value="LRR_TM_domain-containing"/>
</dbReference>
<dbReference type="PANTHER" id="PTHR24369">
    <property type="entry name" value="ANTIGEN BSP, PUTATIVE-RELATED"/>
    <property type="match status" value="1"/>
</dbReference>
<dbReference type="PANTHER" id="PTHR24369:SF161">
    <property type="entry name" value="LEUCINE-RICH REPEAT-CONTAINING PROTEIN 53"/>
    <property type="match status" value="1"/>
</dbReference>
<dbReference type="Pfam" id="PF13855">
    <property type="entry name" value="LRR_8"/>
    <property type="match status" value="2"/>
</dbReference>
<dbReference type="SMART" id="SM00369">
    <property type="entry name" value="LRR_TYP"/>
    <property type="match status" value="6"/>
</dbReference>
<dbReference type="SUPFAM" id="SSF52058">
    <property type="entry name" value="L domain-like"/>
    <property type="match status" value="1"/>
</dbReference>
<dbReference type="PROSITE" id="PS51450">
    <property type="entry name" value="LRR"/>
    <property type="match status" value="7"/>
</dbReference>
<gene>
    <name type="primary">LRRC53</name>
    <name type="ORF">QflA-11149</name>
</gene>
<sequence length="510" mass="56496">MLQLVAACPESCVVCTKDVTLCHQLTYIVAAPMTTRVLIITDGYLSSIESTNLSLLFNLALLSLSRNGIEDVQEDALDGLTMLRTLLLEHNQISSSSLTDHTFSKLHSLQVLVLSNNALRTLRGSWFRNTRGLTRLQLDGNQITNLTDSSFGGTNLHSLRHLDLSNNFISYIGKDAFRPLPQLQEVDLSRNRLAHMPDVFTPLKQLIHLSLDKNQWSCTCDLHPLARFLRNYIKSSAHTLRNAKDLNCQPSTAAVAAAQSVLRLSETNCDPKAPNFTLVLKDRSPLLPGQDVALLTVLGFAGAVGLTCLGLVVFNWKLQQGKANEHTSENLCCRTFDEPLCAHGARNYHTKGYCNCHLTQENEIKVMSIVGSRKEMPLLQENSHQATSASESTTLDGSFRNLKKKDHGVGSTLFCQDGRLLHSRCSQSPGNTTAFNEAGLLTTYNSRKVQKLRNLESGEVLPQTLPHHIIRTEDISSDTFRRRYAIPTSALAGESLEKHLTNESCLHTLN</sequence>
<keyword id="KW-0433">Leucine-rich repeat</keyword>
<keyword id="KW-0472">Membrane</keyword>
<keyword id="KW-1185">Reference proteome</keyword>
<keyword id="KW-0677">Repeat</keyword>
<keyword id="KW-0812">Transmembrane</keyword>
<keyword id="KW-1133">Transmembrane helix</keyword>
<name>LRC53_MACFA</name>